<comment type="function">
    <text evidence="2">A DNA-binding protein implicated in transcriptional repression and chromosome organization and compaction. Binds nucleation sites in AT-rich DNA and bridges them, forming higher-order nucleoprotein complexes and condensing the chromosome. As many horizontally transferred genes are AT-rich, it plays a central role in silencing foreign genes. A subset of genes are repressed by H-NS in association with other proteins (By similarity).</text>
</comment>
<comment type="subunit">
    <text evidence="2">Homodimer that oligomerizes on DNA into higher-order complexes that form bridges between disparate regions of DNA compacting it. Interacts with YmoA and other similar proteins.</text>
</comment>
<comment type="subcellular location">
    <subcellularLocation>
        <location evidence="2">Cytoplasm</location>
        <location evidence="2">Nucleoid</location>
    </subcellularLocation>
</comment>
<comment type="similarity">
    <text evidence="3">Belongs to the histone-like protein H-NS family.</text>
</comment>
<gene>
    <name type="primary">hns</name>
    <name type="synonym">hnsA</name>
</gene>
<evidence type="ECO:0000250" key="1">
    <source>
        <dbReference type="UniProtKB" id="P0A1S2"/>
    </source>
</evidence>
<evidence type="ECO:0000250" key="2">
    <source>
        <dbReference type="UniProtKB" id="P0ACF8"/>
    </source>
</evidence>
<evidence type="ECO:0000305" key="3"/>
<dbReference type="PIR" id="S02776">
    <property type="entry name" value="S02776"/>
</dbReference>
<dbReference type="SMR" id="P18818"/>
<dbReference type="STRING" id="585.DR95_630"/>
<dbReference type="GO" id="GO:0005829">
    <property type="term" value="C:cytosol"/>
    <property type="evidence" value="ECO:0007669"/>
    <property type="project" value="TreeGrafter"/>
</dbReference>
<dbReference type="GO" id="GO:0009295">
    <property type="term" value="C:nucleoid"/>
    <property type="evidence" value="ECO:0007669"/>
    <property type="project" value="UniProtKB-SubCell"/>
</dbReference>
<dbReference type="GO" id="GO:0032993">
    <property type="term" value="C:protein-DNA complex"/>
    <property type="evidence" value="ECO:0007669"/>
    <property type="project" value="TreeGrafter"/>
</dbReference>
<dbReference type="GO" id="GO:0003681">
    <property type="term" value="F:bent DNA binding"/>
    <property type="evidence" value="ECO:0007669"/>
    <property type="project" value="TreeGrafter"/>
</dbReference>
<dbReference type="GO" id="GO:0001217">
    <property type="term" value="F:DNA-binding transcription repressor activity"/>
    <property type="evidence" value="ECO:0007669"/>
    <property type="project" value="TreeGrafter"/>
</dbReference>
<dbReference type="GO" id="GO:0003680">
    <property type="term" value="F:minor groove of adenine-thymine-rich DNA binding"/>
    <property type="evidence" value="ECO:0007669"/>
    <property type="project" value="TreeGrafter"/>
</dbReference>
<dbReference type="GO" id="GO:0046983">
    <property type="term" value="F:protein dimerization activity"/>
    <property type="evidence" value="ECO:0007669"/>
    <property type="project" value="InterPro"/>
</dbReference>
<dbReference type="GO" id="GO:0030527">
    <property type="term" value="F:structural constituent of chromatin"/>
    <property type="evidence" value="ECO:0007669"/>
    <property type="project" value="InterPro"/>
</dbReference>
<dbReference type="GO" id="GO:0000976">
    <property type="term" value="F:transcription cis-regulatory region binding"/>
    <property type="evidence" value="ECO:0007669"/>
    <property type="project" value="TreeGrafter"/>
</dbReference>
<dbReference type="FunFam" id="1.10.287.1050:FF:000001">
    <property type="entry name" value="DNA-binding protein"/>
    <property type="match status" value="1"/>
</dbReference>
<dbReference type="FunFam" id="4.10.430.10:FF:000001">
    <property type="entry name" value="DNA-binding protein"/>
    <property type="match status" value="1"/>
</dbReference>
<dbReference type="Gene3D" id="1.10.287.1050">
    <property type="entry name" value="H-NS histone-like proteins"/>
    <property type="match status" value="1"/>
</dbReference>
<dbReference type="Gene3D" id="4.10.430.10">
    <property type="entry name" value="Histone-like protein H-NS, C-terminal domain"/>
    <property type="match status" value="1"/>
</dbReference>
<dbReference type="InterPro" id="IPR054180">
    <property type="entry name" value="H-NS-like_N"/>
</dbReference>
<dbReference type="InterPro" id="IPR027444">
    <property type="entry name" value="H-NS_C_dom"/>
</dbReference>
<dbReference type="InterPro" id="IPR037150">
    <property type="entry name" value="H-NS_C_dom_sf"/>
</dbReference>
<dbReference type="InterPro" id="IPR001801">
    <property type="entry name" value="Histone_HNS"/>
</dbReference>
<dbReference type="InterPro" id="IPR027454">
    <property type="entry name" value="Histone_HNS_N"/>
</dbReference>
<dbReference type="NCBIfam" id="NF008193">
    <property type="entry name" value="PRK10947.1"/>
    <property type="match status" value="1"/>
</dbReference>
<dbReference type="PANTHER" id="PTHR38097">
    <property type="match status" value="1"/>
</dbReference>
<dbReference type="PANTHER" id="PTHR38097:SF1">
    <property type="entry name" value="DNA-BINDING PROTEIN H-NS"/>
    <property type="match status" value="1"/>
</dbReference>
<dbReference type="Pfam" id="PF00816">
    <property type="entry name" value="Histone_HNS"/>
    <property type="match status" value="1"/>
</dbReference>
<dbReference type="Pfam" id="PF22470">
    <property type="entry name" value="Histone_HNS_N"/>
    <property type="match status" value="1"/>
</dbReference>
<dbReference type="PIRSF" id="PIRSF002096">
    <property type="entry name" value="HnS"/>
    <property type="match status" value="1"/>
</dbReference>
<dbReference type="SMART" id="SM00528">
    <property type="entry name" value="HNS"/>
    <property type="match status" value="1"/>
</dbReference>
<dbReference type="SUPFAM" id="SSF81273">
    <property type="entry name" value="H-NS histone-like proteins"/>
    <property type="match status" value="2"/>
</dbReference>
<accession>P18818</accession>
<protein>
    <recommendedName>
        <fullName>DNA-binding protein H-NS</fullName>
    </recommendedName>
    <alternativeName>
        <fullName>Histone-like protein HLP-II</fullName>
    </alternativeName>
</protein>
<reference key="1">
    <citation type="journal article" date="1989" name="FEBS Lett.">
        <title>Characterization of the structural genes for the DNA-binding protein H-NS in Enterobacteriaceae.</title>
        <authorList>
            <person name="la Teana A."/>
            <person name="Falconi M."/>
            <person name="Scarlato V."/>
            <person name="Lammi M."/>
            <person name="Pon C.L."/>
        </authorList>
    </citation>
    <scope>NUCLEOTIDE SEQUENCE [GENOMIC DNA]</scope>
</reference>
<organism>
    <name type="scientific">Proteus vulgaris</name>
    <dbReference type="NCBI Taxonomy" id="585"/>
    <lineage>
        <taxon>Bacteria</taxon>
        <taxon>Pseudomonadati</taxon>
        <taxon>Pseudomonadota</taxon>
        <taxon>Gammaproteobacteria</taxon>
        <taxon>Enterobacterales</taxon>
        <taxon>Morganellaceae</taxon>
        <taxon>Proteus</taxon>
    </lineage>
</organism>
<keyword id="KW-0963">Cytoplasm</keyword>
<keyword id="KW-0238">DNA-binding</keyword>
<keyword id="KW-0678">Repressor</keyword>
<keyword id="KW-0804">Transcription</keyword>
<keyword id="KW-0805">Transcription regulation</keyword>
<proteinExistence type="inferred from homology"/>
<name>HNS_PROVU</name>
<sequence>MSESLKILNNIRTLRAQARETSLETLEEMLEKLEVVVNERREEEQAMQAEIEERQQKLQKYRELLIADGIDPTDLLEAAGASKTGRAKRAARPAKYSYVDDNGETKTWTGQGRTLAVIKRAIEEEGKSLEDFLI</sequence>
<feature type="initiator methionine" description="Removed" evidence="2">
    <location>
        <position position="1"/>
    </location>
</feature>
<feature type="chain" id="PRO_0000168507" description="DNA-binding protein H-NS">
    <location>
        <begin position="2"/>
        <end position="134"/>
    </location>
</feature>
<feature type="DNA-binding region" evidence="1">
    <location>
        <begin position="111"/>
        <end position="116"/>
    </location>
</feature>